<accession>P32211</accession>
<accession>Q64056</accession>
<keyword id="KW-1003">Cell membrane</keyword>
<keyword id="KW-1015">Disulfide bond</keyword>
<keyword id="KW-0297">G-protein coupled receptor</keyword>
<keyword id="KW-0325">Glycoprotein</keyword>
<keyword id="KW-0472">Membrane</keyword>
<keyword id="KW-0597">Phosphoprotein</keyword>
<keyword id="KW-0628">Postsynaptic cell membrane</keyword>
<keyword id="KW-0675">Receptor</keyword>
<keyword id="KW-1185">Reference proteome</keyword>
<keyword id="KW-0770">Synapse</keyword>
<keyword id="KW-0807">Transducer</keyword>
<keyword id="KW-0812">Transmembrane</keyword>
<keyword id="KW-1133">Transmembrane helix</keyword>
<evidence type="ECO:0000250" key="1"/>
<evidence type="ECO:0000255" key="2"/>
<evidence type="ECO:0000255" key="3">
    <source>
        <dbReference type="PROSITE-ProRule" id="PRU00521"/>
    </source>
</evidence>
<evidence type="ECO:0000256" key="4">
    <source>
        <dbReference type="SAM" id="MobiDB-lite"/>
    </source>
</evidence>
<evidence type="ECO:0000305" key="5"/>
<name>ACM4_MOUSE</name>
<dbReference type="EMBL" id="X63473">
    <property type="protein sequence ID" value="CAA45071.1"/>
    <property type="molecule type" value="Genomic_DNA"/>
</dbReference>
<dbReference type="EMBL" id="S74916">
    <property type="protein sequence ID" value="AAB33577.1"/>
    <property type="molecule type" value="mRNA"/>
</dbReference>
<dbReference type="CCDS" id="CCDS16439.1"/>
<dbReference type="PIR" id="S33776">
    <property type="entry name" value="S33776"/>
</dbReference>
<dbReference type="RefSeq" id="NP_001403867.1">
    <property type="nucleotide sequence ID" value="NM_001416938.1"/>
</dbReference>
<dbReference type="RefSeq" id="NP_031725.1">
    <property type="nucleotide sequence ID" value="NM_007699.3"/>
</dbReference>
<dbReference type="SMR" id="P32211"/>
<dbReference type="BioGRID" id="198708">
    <property type="interactions" value="1"/>
</dbReference>
<dbReference type="FunCoup" id="P32211">
    <property type="interactions" value="643"/>
</dbReference>
<dbReference type="IntAct" id="P32211">
    <property type="interactions" value="1"/>
</dbReference>
<dbReference type="MINT" id="P32211"/>
<dbReference type="STRING" id="10090.ENSMUSP00000040808"/>
<dbReference type="BindingDB" id="P32211"/>
<dbReference type="ChEMBL" id="CHEMBL4572"/>
<dbReference type="DrugCentral" id="P32211"/>
<dbReference type="GlyCosmos" id="P32211">
    <property type="glycosylation" value="2 sites, No reported glycans"/>
</dbReference>
<dbReference type="GlyGen" id="P32211">
    <property type="glycosylation" value="4 sites, 1 N-linked glycan (1 site), 1 O-linked glycan (1 site)"/>
</dbReference>
<dbReference type="iPTMnet" id="P32211"/>
<dbReference type="PhosphoSitePlus" id="P32211"/>
<dbReference type="SwissPalm" id="P32211"/>
<dbReference type="PaxDb" id="10090-ENSMUSP00000040808"/>
<dbReference type="ProteomicsDB" id="285645"/>
<dbReference type="Antibodypedia" id="26327">
    <property type="antibodies" value="197 antibodies from 30 providers"/>
</dbReference>
<dbReference type="DNASU" id="12672"/>
<dbReference type="Ensembl" id="ENSMUST00000045537.4">
    <property type="protein sequence ID" value="ENSMUSP00000040808.4"/>
    <property type="gene ID" value="ENSMUSG00000040495.5"/>
</dbReference>
<dbReference type="GeneID" id="12672"/>
<dbReference type="KEGG" id="mmu:12672"/>
<dbReference type="UCSC" id="uc008kwv.2">
    <property type="organism name" value="mouse"/>
</dbReference>
<dbReference type="AGR" id="MGI:88399"/>
<dbReference type="CTD" id="1132"/>
<dbReference type="MGI" id="MGI:88399">
    <property type="gene designation" value="Chrm4"/>
</dbReference>
<dbReference type="VEuPathDB" id="HostDB:ENSMUSG00000040495"/>
<dbReference type="eggNOG" id="KOG4220">
    <property type="taxonomic scope" value="Eukaryota"/>
</dbReference>
<dbReference type="GeneTree" id="ENSGT00940000160394"/>
<dbReference type="HOGENOM" id="CLU_009579_11_2_1"/>
<dbReference type="InParanoid" id="P32211"/>
<dbReference type="OMA" id="INTFCNY"/>
<dbReference type="OrthoDB" id="10071887at2759"/>
<dbReference type="PhylomeDB" id="P32211"/>
<dbReference type="TreeFam" id="TF320495"/>
<dbReference type="Reactome" id="R-MMU-390648">
    <property type="pathway name" value="Muscarinic acetylcholine receptors"/>
</dbReference>
<dbReference type="Reactome" id="R-MMU-418594">
    <property type="pathway name" value="G alpha (i) signalling events"/>
</dbReference>
<dbReference type="BioGRID-ORCS" id="12672">
    <property type="hits" value="2 hits in 77 CRISPR screens"/>
</dbReference>
<dbReference type="ChiTaRS" id="Chrm4">
    <property type="organism name" value="mouse"/>
</dbReference>
<dbReference type="PRO" id="PR:P32211"/>
<dbReference type="Proteomes" id="UP000000589">
    <property type="component" value="Chromosome 2"/>
</dbReference>
<dbReference type="RNAct" id="P32211">
    <property type="molecule type" value="protein"/>
</dbReference>
<dbReference type="Bgee" id="ENSMUSG00000040495">
    <property type="expression patterns" value="Expressed in superior frontal gyrus and 61 other cell types or tissues"/>
</dbReference>
<dbReference type="ExpressionAtlas" id="P32211">
    <property type="expression patterns" value="baseline and differential"/>
</dbReference>
<dbReference type="GO" id="GO:0016020">
    <property type="term" value="C:membrane"/>
    <property type="evidence" value="ECO:0000314"/>
    <property type="project" value="MGI"/>
</dbReference>
<dbReference type="GO" id="GO:0045211">
    <property type="term" value="C:postsynaptic membrane"/>
    <property type="evidence" value="ECO:0007669"/>
    <property type="project" value="UniProtKB-SubCell"/>
</dbReference>
<dbReference type="GO" id="GO:0016907">
    <property type="term" value="F:G protein-coupled acetylcholine receptor activity"/>
    <property type="evidence" value="ECO:0000314"/>
    <property type="project" value="MGI"/>
</dbReference>
<dbReference type="GO" id="GO:0007197">
    <property type="term" value="P:adenylate cyclase-inhibiting G protein-coupled acetylcholine receptor signaling pathway"/>
    <property type="evidence" value="ECO:0000314"/>
    <property type="project" value="MGI"/>
</dbReference>
<dbReference type="GO" id="GO:0040012">
    <property type="term" value="P:regulation of locomotion"/>
    <property type="evidence" value="ECO:0007669"/>
    <property type="project" value="InterPro"/>
</dbReference>
<dbReference type="CDD" id="cd15298">
    <property type="entry name" value="7tmA_mAChR_M4"/>
    <property type="match status" value="1"/>
</dbReference>
<dbReference type="FunFam" id="1.20.1070.10:FF:000038">
    <property type="entry name" value="Muscarinic acetylcholine receptor"/>
    <property type="match status" value="1"/>
</dbReference>
<dbReference type="FunFam" id="1.20.1070.10:FF:000041">
    <property type="entry name" value="Muscarinic acetylcholine receptor"/>
    <property type="match status" value="1"/>
</dbReference>
<dbReference type="Gene3D" id="1.20.1070.10">
    <property type="entry name" value="Rhodopsin 7-helix transmembrane proteins"/>
    <property type="match status" value="2"/>
</dbReference>
<dbReference type="InterPro" id="IPR000276">
    <property type="entry name" value="GPCR_Rhodpsn"/>
</dbReference>
<dbReference type="InterPro" id="IPR017452">
    <property type="entry name" value="GPCR_Rhodpsn_7TM"/>
</dbReference>
<dbReference type="InterPro" id="IPR001432">
    <property type="entry name" value="Musac_Ach_M4_rcpt"/>
</dbReference>
<dbReference type="InterPro" id="IPR000995">
    <property type="entry name" value="Musac_Ach_rcpt"/>
</dbReference>
<dbReference type="PANTHER" id="PTHR24247">
    <property type="entry name" value="5-HYDROXYTRYPTAMINE RECEPTOR"/>
    <property type="match status" value="1"/>
</dbReference>
<dbReference type="PANTHER" id="PTHR24247:SF180">
    <property type="entry name" value="MUSCARINIC ACETYLCHOLINE RECEPTOR M4"/>
    <property type="match status" value="1"/>
</dbReference>
<dbReference type="Pfam" id="PF00001">
    <property type="entry name" value="7tm_1"/>
    <property type="match status" value="1"/>
</dbReference>
<dbReference type="PRINTS" id="PR00237">
    <property type="entry name" value="GPCRRHODOPSN"/>
</dbReference>
<dbReference type="PRINTS" id="PR00243">
    <property type="entry name" value="MUSCARINICR"/>
</dbReference>
<dbReference type="PRINTS" id="PR00541">
    <property type="entry name" value="MUSCRINICM4R"/>
</dbReference>
<dbReference type="SMART" id="SM01381">
    <property type="entry name" value="7TM_GPCR_Srsx"/>
    <property type="match status" value="1"/>
</dbReference>
<dbReference type="SUPFAM" id="SSF81321">
    <property type="entry name" value="Family A G protein-coupled receptor-like"/>
    <property type="match status" value="1"/>
</dbReference>
<dbReference type="PROSITE" id="PS00237">
    <property type="entry name" value="G_PROTEIN_RECEP_F1_1"/>
    <property type="match status" value="1"/>
</dbReference>
<dbReference type="PROSITE" id="PS50262">
    <property type="entry name" value="G_PROTEIN_RECEP_F1_2"/>
    <property type="match status" value="1"/>
</dbReference>
<protein>
    <recommendedName>
        <fullName>Muscarinic acetylcholine receptor M4</fullName>
    </recommendedName>
    <alternativeName>
        <fullName>Mm4 mAChR</fullName>
    </alternativeName>
</protein>
<sequence length="479" mass="52973">MANFTPVNGSSANQSVRLVTTAHNHLETVEMVFIATVTGSLSLVTVVGNILVMLSIKVNRQLQTVNNYFLFSLACADLIIGAFSMNLYTLYIIKGYWPLGAVVCDLWLALDYVVSNASVMNLLIISFDRYFCVTKPLTYPARRTTKMAGLMIAAAWVLSFVLWAPAILFWQFVVGKRTVPDNQCFIQFLSNPAVTFGTAIAAFYLPVVIMTVLYIHISLASRSRVHKHRPEGPKEKKAKTLAFLKSPLMKPSIKKPPPGGASREELRNGKLEEAPPPALPPPPRPVADKDTSNESSSGSATQNTKERPPTELSTTEAATTPALPAPTLQPRTLNPASKWSKIQIVTKQTGSECVTAIEIVPATPAGMRPAANVARKFASIARNQVRKKRQMAARERKVTRTIFAILLAFILTWTPYNVMVLVNTFCQSCIPERVWSIGYWLCYVNSTINPACYALCNATFKKTFRHLLLCQYRNIGTAR</sequence>
<reference key="1">
    <citation type="journal article" date="1993" name="Biochim. Biophys. Acta">
        <title>Isolation, sequence and functional expression of the mouse m4 muscarinic acetylcholine receptor gene.</title>
        <authorList>
            <person name="van Koppen C.J."/>
            <person name="Lenz W."/>
            <person name="Nathanson N.M."/>
        </authorList>
    </citation>
    <scope>NUCLEOTIDE SEQUENCE [GENOMIC DNA]</scope>
</reference>
<reference key="2">
    <citation type="journal article" date="1994" name="Eur. J. Neurosci.">
        <title>Cultured neurons from mouse brain reproduce the muscarinic receptor profile of their tissue of origin.</title>
        <authorList>
            <person name="Andre C."/>
            <person name="Dos Santos G."/>
            <person name="Koulakoff A."/>
        </authorList>
    </citation>
    <scope>NUCLEOTIDE SEQUENCE [MRNA] OF 235-355</scope>
    <source>
        <tissue>Brain</tissue>
    </source>
</reference>
<gene>
    <name type="primary">Chrm4</name>
    <name type="synonym">Chrm-4</name>
</gene>
<feature type="chain" id="PRO_0000069038" description="Muscarinic acetylcholine receptor M4">
    <location>
        <begin position="1"/>
        <end position="479"/>
    </location>
</feature>
<feature type="topological domain" description="Extracellular" evidence="1">
    <location>
        <begin position="1"/>
        <end position="30"/>
    </location>
</feature>
<feature type="transmembrane region" description="Helical; Name=1" evidence="1">
    <location>
        <begin position="31"/>
        <end position="53"/>
    </location>
</feature>
<feature type="topological domain" description="Cytoplasmic" evidence="1">
    <location>
        <begin position="54"/>
        <end position="67"/>
    </location>
</feature>
<feature type="transmembrane region" description="Helical; Name=2" evidence="1">
    <location>
        <begin position="68"/>
        <end position="88"/>
    </location>
</feature>
<feature type="topological domain" description="Extracellular" evidence="1">
    <location>
        <begin position="89"/>
        <end position="105"/>
    </location>
</feature>
<feature type="transmembrane region" description="Helical; Name=3" evidence="1">
    <location>
        <begin position="106"/>
        <end position="127"/>
    </location>
</feature>
<feature type="topological domain" description="Cytoplasmic" evidence="1">
    <location>
        <begin position="128"/>
        <end position="147"/>
    </location>
</feature>
<feature type="transmembrane region" description="Helical; Name=4" evidence="1">
    <location>
        <begin position="148"/>
        <end position="170"/>
    </location>
</feature>
<feature type="topological domain" description="Extracellular" evidence="1">
    <location>
        <begin position="171"/>
        <end position="192"/>
    </location>
</feature>
<feature type="transmembrane region" description="Helical; Name=5" evidence="1">
    <location>
        <begin position="193"/>
        <end position="215"/>
    </location>
</feature>
<feature type="topological domain" description="Cytoplasmic" evidence="1">
    <location>
        <begin position="216"/>
        <end position="401"/>
    </location>
</feature>
<feature type="transmembrane region" description="Helical; Name=6" evidence="1">
    <location>
        <begin position="402"/>
        <end position="422"/>
    </location>
</feature>
<feature type="topological domain" description="Extracellular" evidence="1">
    <location>
        <begin position="423"/>
        <end position="436"/>
    </location>
</feature>
<feature type="transmembrane region" description="Helical; Name=7" evidence="1">
    <location>
        <begin position="437"/>
        <end position="456"/>
    </location>
</feature>
<feature type="topological domain" description="Cytoplasmic" evidence="1">
    <location>
        <begin position="457"/>
        <end position="479"/>
    </location>
</feature>
<feature type="region of interest" description="Disordered" evidence="4">
    <location>
        <begin position="271"/>
        <end position="334"/>
    </location>
</feature>
<feature type="compositionally biased region" description="Pro residues" evidence="4">
    <location>
        <begin position="274"/>
        <end position="285"/>
    </location>
</feature>
<feature type="compositionally biased region" description="Polar residues" evidence="4">
    <location>
        <begin position="293"/>
        <end position="303"/>
    </location>
</feature>
<feature type="compositionally biased region" description="Low complexity" evidence="4">
    <location>
        <begin position="310"/>
        <end position="333"/>
    </location>
</feature>
<feature type="modified residue" description="Phosphothreonine" evidence="2">
    <location>
        <position position="459"/>
    </location>
</feature>
<feature type="modified residue" description="Phosphothreonine" evidence="2">
    <location>
        <position position="463"/>
    </location>
</feature>
<feature type="modified residue" description="Phosphothreonine" evidence="2">
    <location>
        <position position="477"/>
    </location>
</feature>
<feature type="glycosylation site" description="N-linked (GlcNAc...) asparagine" evidence="2">
    <location>
        <position position="8"/>
    </location>
</feature>
<feature type="glycosylation site" description="N-linked (GlcNAc...) asparagine" evidence="2">
    <location>
        <position position="13"/>
    </location>
</feature>
<feature type="disulfide bond" evidence="3">
    <location>
        <begin position="104"/>
        <end position="184"/>
    </location>
</feature>
<feature type="sequence conflict" description="In Ref. 2; AAB33577." evidence="5" ref="2">
    <original>AL</original>
    <variation>V</variation>
    <location>
        <begin position="322"/>
        <end position="323"/>
    </location>
</feature>
<feature type="sequence conflict" description="In Ref. 2; AAB33577." evidence="5" ref="2">
    <original>S</original>
    <variation>N</variation>
    <location>
        <position position="351"/>
    </location>
</feature>
<comment type="function">
    <text>The muscarinic acetylcholine receptor mediates various cellular responses, including inhibition of adenylate cyclase, breakdown of phosphoinositides and modulation of potassium channels through the action of G proteins. Primary transducing effect is inhibition of adenylate cyclase.</text>
</comment>
<comment type="subcellular location">
    <subcellularLocation>
        <location>Cell membrane</location>
        <topology>Multi-pass membrane protein</topology>
    </subcellularLocation>
    <subcellularLocation>
        <location>Postsynaptic cell membrane</location>
        <topology>Multi-pass membrane protein</topology>
    </subcellularLocation>
</comment>
<comment type="similarity">
    <text evidence="3">Belongs to the G-protein coupled receptor 1 family. Muscarinic acetylcholine receptor subfamily. CHRM4 sub-subfamily.</text>
</comment>
<organism>
    <name type="scientific">Mus musculus</name>
    <name type="common">Mouse</name>
    <dbReference type="NCBI Taxonomy" id="10090"/>
    <lineage>
        <taxon>Eukaryota</taxon>
        <taxon>Metazoa</taxon>
        <taxon>Chordata</taxon>
        <taxon>Craniata</taxon>
        <taxon>Vertebrata</taxon>
        <taxon>Euteleostomi</taxon>
        <taxon>Mammalia</taxon>
        <taxon>Eutheria</taxon>
        <taxon>Euarchontoglires</taxon>
        <taxon>Glires</taxon>
        <taxon>Rodentia</taxon>
        <taxon>Myomorpha</taxon>
        <taxon>Muroidea</taxon>
        <taxon>Muridae</taxon>
        <taxon>Murinae</taxon>
        <taxon>Mus</taxon>
        <taxon>Mus</taxon>
    </lineage>
</organism>
<proteinExistence type="evidence at transcript level"/>